<comment type="function">
    <text evidence="1 3">Isoform 2 dephosphorylates phosphorylated phytochromes, with a preference toward Pfr forms, and enhances phytochrome-mediated photoresponses (By similarity). Can use para-nitrophenylphosphate (pNPP) and phosphorylated casein as substrate at pH 7.5 and 5.0.</text>
</comment>
<comment type="catalytic activity">
    <reaction>
        <text>O-phospho-L-seryl-[protein] + H2O = L-seryl-[protein] + phosphate</text>
        <dbReference type="Rhea" id="RHEA:20629"/>
        <dbReference type="Rhea" id="RHEA-COMP:9863"/>
        <dbReference type="Rhea" id="RHEA-COMP:11604"/>
        <dbReference type="ChEBI" id="CHEBI:15377"/>
        <dbReference type="ChEBI" id="CHEBI:29999"/>
        <dbReference type="ChEBI" id="CHEBI:43474"/>
        <dbReference type="ChEBI" id="CHEBI:83421"/>
        <dbReference type="EC" id="3.1.3.16"/>
    </reaction>
</comment>
<comment type="catalytic activity">
    <reaction>
        <text>O-phospho-L-threonyl-[protein] + H2O = L-threonyl-[protein] + phosphate</text>
        <dbReference type="Rhea" id="RHEA:47004"/>
        <dbReference type="Rhea" id="RHEA-COMP:11060"/>
        <dbReference type="Rhea" id="RHEA-COMP:11605"/>
        <dbReference type="ChEBI" id="CHEBI:15377"/>
        <dbReference type="ChEBI" id="CHEBI:30013"/>
        <dbReference type="ChEBI" id="CHEBI:43474"/>
        <dbReference type="ChEBI" id="CHEBI:61977"/>
        <dbReference type="EC" id="3.1.3.16"/>
    </reaction>
</comment>
<comment type="cofactor">
    <cofactor evidence="1">
        <name>Mn(2+)</name>
        <dbReference type="ChEBI" id="CHEBI:29035"/>
    </cofactor>
    <text evidence="1">Binds 2 manganese ions per subunit.</text>
</comment>
<comment type="activity regulation">
    <text>Activated by linoleic acid, linolenic acid, oleic acid, and arachidonic acid (AA).</text>
</comment>
<comment type="subunit">
    <text evidence="1">Interacts with PHYA and PHYB, mostly when they are phosphorylated and in Pfr forms.</text>
</comment>
<comment type="subcellular location">
    <molecule>Isoform 1</molecule>
    <subcellularLocation>
        <location>Endoplasmic reticulum membrane</location>
        <topology>Multi-pass membrane protein</topology>
    </subcellularLocation>
    <subcellularLocation>
        <location>Nucleus membrane</location>
        <topology>Multi-pass membrane protein</topology>
    </subcellularLocation>
</comment>
<comment type="subcellular location">
    <molecule>Isoform 2</molecule>
    <subcellularLocation>
        <location>Cytoplasm</location>
    </subcellularLocation>
    <subcellularLocation>
        <location>Nucleus</location>
        <location>Nucleoplasm</location>
    </subcellularLocation>
    <subcellularLocation>
        <location>Nucleus speckle</location>
    </subcellularLocation>
    <text evidence="1">Cytoplasmic in darkness, but translocated to the nucleus upon illumination, when associated with phytochromes into speckles.</text>
</comment>
<comment type="alternative products">
    <event type="alternative splicing"/>
    <isoform>
        <id>Q84K11-1</id>
        <name>1</name>
        <name>62 kDa isoform</name>
        <sequence type="displayed"/>
    </isoform>
    <isoform>
        <id>Q84K11-2</id>
        <name>2</name>
        <name>55 kDa isoform</name>
        <sequence type="described" ref="VSP_029090"/>
    </isoform>
</comment>
<comment type="tissue specificity">
    <text evidence="3">Expressed in roots, stems, leaves, flowers, and fruits.</text>
</comment>
<comment type="domain">
    <text evidence="1">TPR repeats are required for the binding with phytochromes.</text>
</comment>
<comment type="miscellaneous">
    <molecule>Isoform 2</molecule>
    <text evidence="5">Partial isoform 2 (148-485) lacking TPR repeats exhibits enhanced activity at pH 7.5 but not at pH 5.0 with phosphocasein as substrate. This partial protein is in addition inhibited by okadaic acid.</text>
</comment>
<comment type="similarity">
    <text evidence="5">Belongs to the PPP phosphatase family. PP-5 (PP-T) subfamily.</text>
</comment>
<accession>Q84K11</accession>
<accession>Q8H1H4</accession>
<proteinExistence type="evidence at protein level"/>
<protein>
    <recommendedName>
        <fullName>Serine/threonine-protein phosphatase 5</fullName>
        <ecNumber>3.1.3.16</ecNumber>
    </recommendedName>
    <alternativeName>
        <fullName>LePP5</fullName>
    </alternativeName>
</protein>
<name>PPP5_SOLLC</name>
<evidence type="ECO:0000250" key="1"/>
<evidence type="ECO:0000255" key="2"/>
<evidence type="ECO:0000269" key="3">
    <source>
    </source>
</evidence>
<evidence type="ECO:0000303" key="4">
    <source>
    </source>
</evidence>
<evidence type="ECO:0000305" key="5"/>
<feature type="chain" id="PRO_0000308995" description="Serine/threonine-protein phosphatase 5">
    <location>
        <begin position="1"/>
        <end position="556"/>
    </location>
</feature>
<feature type="transmembrane region" description="Helical" evidence="2">
    <location>
        <begin position="171"/>
        <end position="191"/>
    </location>
</feature>
<feature type="transmembrane region" description="Helical" evidence="2">
    <location>
        <begin position="192"/>
        <end position="212"/>
    </location>
</feature>
<feature type="repeat" description="TPR 1">
    <location>
        <begin position="14"/>
        <end position="47"/>
    </location>
</feature>
<feature type="repeat" description="TPR 2">
    <location>
        <begin position="49"/>
        <end position="81"/>
    </location>
</feature>
<feature type="repeat" description="TPR 3">
    <location>
        <begin position="82"/>
        <end position="115"/>
    </location>
</feature>
<feature type="active site" description="Proton donor" evidence="1">
    <location>
        <position position="362"/>
    </location>
</feature>
<feature type="binding site" evidence="1">
    <location>
        <position position="300"/>
    </location>
    <ligand>
        <name>Mn(2+)</name>
        <dbReference type="ChEBI" id="CHEBI:29035"/>
        <label>1</label>
    </ligand>
</feature>
<feature type="binding site" evidence="1">
    <location>
        <position position="302"/>
    </location>
    <ligand>
        <name>Mn(2+)</name>
        <dbReference type="ChEBI" id="CHEBI:29035"/>
        <label>1</label>
    </ligand>
</feature>
<feature type="binding site" evidence="1">
    <location>
        <position position="329"/>
    </location>
    <ligand>
        <name>Mn(2+)</name>
        <dbReference type="ChEBI" id="CHEBI:29035"/>
        <label>1</label>
    </ligand>
</feature>
<feature type="binding site" evidence="1">
    <location>
        <position position="329"/>
    </location>
    <ligand>
        <name>Mn(2+)</name>
        <dbReference type="ChEBI" id="CHEBI:29035"/>
        <label>2</label>
    </ligand>
</feature>
<feature type="binding site" evidence="1">
    <location>
        <position position="361"/>
    </location>
    <ligand>
        <name>Mn(2+)</name>
        <dbReference type="ChEBI" id="CHEBI:29035"/>
        <label>2</label>
    </ligand>
</feature>
<feature type="binding site" evidence="1">
    <location>
        <position position="410"/>
    </location>
    <ligand>
        <name>Mn(2+)</name>
        <dbReference type="ChEBI" id="CHEBI:29035"/>
        <label>2</label>
    </ligand>
</feature>
<feature type="binding site" evidence="1">
    <location>
        <position position="485"/>
    </location>
    <ligand>
        <name>Mn(2+)</name>
        <dbReference type="ChEBI" id="CHEBI:29035"/>
        <label>2</label>
    </ligand>
</feature>
<feature type="splice variant" id="VSP_029090" description="In isoform 2." evidence="4">
    <location>
        <begin position="158"/>
        <end position="228"/>
    </location>
</feature>
<feature type="mutagenesis site" description="Loss of activity; in isoform 2." evidence="3">
    <original>G</original>
    <variation>R</variation>
    <location>
        <position position="411"/>
    </location>
</feature>
<sequence length="556" mass="61860">MPGMEAENSNASRAEELKQLANEAFKGHKYSQAIDLYTQAIELNGENAVYYANRAFAHTKLEEYGSAIQDGTRAIEIDPRYSKGYYRRGAAYLAMGKFKDALKDFQQVKKLCPNDPDATKKLKECEKAVMKLKFEEAISVPESQRRSVADSIDYRSVGSGPGSSYVPTKTTAVSAAAALMGVLVVYMGTKAATMVAAAASAALLVVLITFLWGRCSDGFFTKSRTLELEVEPQYAGARIEGDVVTLDFVKKMLDDFKNQKNLHKRYAYQIVLQTREMLRALPSLVDIVVPEGKHFTVCGDVHGQFYDLLNIFELNGLPSEDNPYLFNGDFVDRGSFSLEVILTLFAFKCMCPSAIHLARGNHESKSMNKIYGFEGEVRSKLSEIFVELFAEVFCCLPLAHVINEKVFVVHGGLFSVDGVKLSDIRAIDRFCEPPEEGLMCELLWSDPQPQPGRGPSKRGVGLSFGGDVTKRFLQENNLDLVVRSHEVKDEGYEIEHDGKLITVFSAPNYCDQMGNKGAFIRFEAPDMKPNIVTFSAVPHPDVKPMAYANNFLRMFS</sequence>
<organism>
    <name type="scientific">Solanum lycopersicum</name>
    <name type="common">Tomato</name>
    <name type="synonym">Lycopersicon esculentum</name>
    <dbReference type="NCBI Taxonomy" id="4081"/>
    <lineage>
        <taxon>Eukaryota</taxon>
        <taxon>Viridiplantae</taxon>
        <taxon>Streptophyta</taxon>
        <taxon>Embryophyta</taxon>
        <taxon>Tracheophyta</taxon>
        <taxon>Spermatophyta</taxon>
        <taxon>Magnoliopsida</taxon>
        <taxon>eudicotyledons</taxon>
        <taxon>Gunneridae</taxon>
        <taxon>Pentapetalae</taxon>
        <taxon>asterids</taxon>
        <taxon>lamiids</taxon>
        <taxon>Solanales</taxon>
        <taxon>Solanaceae</taxon>
        <taxon>Solanoideae</taxon>
        <taxon>Solaneae</taxon>
        <taxon>Solanum</taxon>
        <taxon>Solanum subgen. Lycopersicon</taxon>
    </lineage>
</organism>
<dbReference type="EC" id="3.1.3.16"/>
<dbReference type="EMBL" id="AY150041">
    <property type="protein sequence ID" value="AAN64317.1"/>
    <property type="molecule type" value="mRNA"/>
</dbReference>
<dbReference type="EMBL" id="AY182777">
    <property type="protein sequence ID" value="AAO26213.1"/>
    <property type="molecule type" value="mRNA"/>
</dbReference>
<dbReference type="EMBL" id="AY182778">
    <property type="protein sequence ID" value="AAO26214.1"/>
    <property type="molecule type" value="Genomic_DNA"/>
</dbReference>
<dbReference type="EMBL" id="AY182778">
    <property type="protein sequence ID" value="AAO26215.1"/>
    <property type="molecule type" value="Genomic_DNA"/>
</dbReference>
<dbReference type="RefSeq" id="NP_001234232.2">
    <property type="nucleotide sequence ID" value="NM_001247303.2"/>
</dbReference>
<dbReference type="SMR" id="Q84K11"/>
<dbReference type="FunCoup" id="Q84K11">
    <property type="interactions" value="4327"/>
</dbReference>
<dbReference type="STRING" id="4081.Q84K11"/>
<dbReference type="GeneID" id="543849"/>
<dbReference type="KEGG" id="sly:543849"/>
<dbReference type="InParanoid" id="Q84K11"/>
<dbReference type="OrthoDB" id="445564at2759"/>
<dbReference type="BRENDA" id="3.1.3.16">
    <property type="organism ID" value="3101"/>
</dbReference>
<dbReference type="Proteomes" id="UP000004994">
    <property type="component" value="Unplaced"/>
</dbReference>
<dbReference type="ExpressionAtlas" id="Q84K11">
    <property type="expression patterns" value="baseline and differential"/>
</dbReference>
<dbReference type="GO" id="GO:0005829">
    <property type="term" value="C:cytosol"/>
    <property type="evidence" value="ECO:0000318"/>
    <property type="project" value="GO_Central"/>
</dbReference>
<dbReference type="GO" id="GO:0005789">
    <property type="term" value="C:endoplasmic reticulum membrane"/>
    <property type="evidence" value="ECO:0007669"/>
    <property type="project" value="UniProtKB-SubCell"/>
</dbReference>
<dbReference type="GO" id="GO:0031965">
    <property type="term" value="C:nuclear membrane"/>
    <property type="evidence" value="ECO:0007669"/>
    <property type="project" value="UniProtKB-SubCell"/>
</dbReference>
<dbReference type="GO" id="GO:0016607">
    <property type="term" value="C:nuclear speck"/>
    <property type="evidence" value="ECO:0007669"/>
    <property type="project" value="UniProtKB-SubCell"/>
</dbReference>
<dbReference type="GO" id="GO:0005634">
    <property type="term" value="C:nucleus"/>
    <property type="evidence" value="ECO:0000318"/>
    <property type="project" value="GO_Central"/>
</dbReference>
<dbReference type="GO" id="GO:0046872">
    <property type="term" value="F:metal ion binding"/>
    <property type="evidence" value="ECO:0007669"/>
    <property type="project" value="UniProtKB-KW"/>
</dbReference>
<dbReference type="GO" id="GO:0004722">
    <property type="term" value="F:protein serine/threonine phosphatase activity"/>
    <property type="evidence" value="ECO:0000318"/>
    <property type="project" value="GO_Central"/>
</dbReference>
<dbReference type="CDD" id="cd07417">
    <property type="entry name" value="MPP_PP5_C"/>
    <property type="match status" value="1"/>
</dbReference>
<dbReference type="FunFam" id="1.25.40.10:FF:000292">
    <property type="entry name" value="Serine/threonine-protein phosphatase 5"/>
    <property type="match status" value="1"/>
</dbReference>
<dbReference type="FunFam" id="3.60.21.10:FF:000021">
    <property type="entry name" value="Serine/threonine-protein phosphatase 5"/>
    <property type="match status" value="1"/>
</dbReference>
<dbReference type="Gene3D" id="3.60.21.10">
    <property type="match status" value="1"/>
</dbReference>
<dbReference type="Gene3D" id="1.25.40.10">
    <property type="entry name" value="Tetratricopeptide repeat domain"/>
    <property type="match status" value="1"/>
</dbReference>
<dbReference type="InterPro" id="IPR004843">
    <property type="entry name" value="Calcineurin-like_PHP_ApaH"/>
</dbReference>
<dbReference type="InterPro" id="IPR029052">
    <property type="entry name" value="Metallo-depent_PP-like"/>
</dbReference>
<dbReference type="InterPro" id="IPR041753">
    <property type="entry name" value="PP5_C"/>
</dbReference>
<dbReference type="InterPro" id="IPR013235">
    <property type="entry name" value="PPP_dom"/>
</dbReference>
<dbReference type="InterPro" id="IPR051134">
    <property type="entry name" value="PPP_phosphatase"/>
</dbReference>
<dbReference type="InterPro" id="IPR006186">
    <property type="entry name" value="Ser/Thr-sp_prot-phosphatase"/>
</dbReference>
<dbReference type="InterPro" id="IPR011990">
    <property type="entry name" value="TPR-like_helical_dom_sf"/>
</dbReference>
<dbReference type="InterPro" id="IPR019734">
    <property type="entry name" value="TPR_rpt"/>
</dbReference>
<dbReference type="PANTHER" id="PTHR45668">
    <property type="entry name" value="SERINE/THREONINE-PROTEIN PHOSPHATASE 5-RELATED"/>
    <property type="match status" value="1"/>
</dbReference>
<dbReference type="PANTHER" id="PTHR45668:SF5">
    <property type="entry name" value="SERINE_THREONINE-PROTEIN PHOSPHATASE 5"/>
    <property type="match status" value="1"/>
</dbReference>
<dbReference type="Pfam" id="PF00149">
    <property type="entry name" value="Metallophos"/>
    <property type="match status" value="1"/>
</dbReference>
<dbReference type="Pfam" id="PF08321">
    <property type="entry name" value="PPP5"/>
    <property type="match status" value="1"/>
</dbReference>
<dbReference type="Pfam" id="PF00515">
    <property type="entry name" value="TPR_1"/>
    <property type="match status" value="1"/>
</dbReference>
<dbReference type="PIRSF" id="PIRSF033096">
    <property type="entry name" value="PPPtase_5"/>
    <property type="match status" value="1"/>
</dbReference>
<dbReference type="PRINTS" id="PR00114">
    <property type="entry name" value="STPHPHTASE"/>
</dbReference>
<dbReference type="SMART" id="SM00156">
    <property type="entry name" value="PP2Ac"/>
    <property type="match status" value="1"/>
</dbReference>
<dbReference type="SMART" id="SM00028">
    <property type="entry name" value="TPR"/>
    <property type="match status" value="3"/>
</dbReference>
<dbReference type="SUPFAM" id="SSF56300">
    <property type="entry name" value="Metallo-dependent phosphatases"/>
    <property type="match status" value="1"/>
</dbReference>
<dbReference type="SUPFAM" id="SSF48452">
    <property type="entry name" value="TPR-like"/>
    <property type="match status" value="1"/>
</dbReference>
<dbReference type="PROSITE" id="PS50005">
    <property type="entry name" value="TPR"/>
    <property type="match status" value="3"/>
</dbReference>
<dbReference type="PROSITE" id="PS50293">
    <property type="entry name" value="TPR_REGION"/>
    <property type="match status" value="1"/>
</dbReference>
<keyword id="KW-0025">Alternative splicing</keyword>
<keyword id="KW-0963">Cytoplasm</keyword>
<keyword id="KW-0256">Endoplasmic reticulum</keyword>
<keyword id="KW-0378">Hydrolase</keyword>
<keyword id="KW-0464">Manganese</keyword>
<keyword id="KW-0472">Membrane</keyword>
<keyword id="KW-0479">Metal-binding</keyword>
<keyword id="KW-0539">Nucleus</keyword>
<keyword id="KW-0904">Protein phosphatase</keyword>
<keyword id="KW-1185">Reference proteome</keyword>
<keyword id="KW-0677">Repeat</keyword>
<keyword id="KW-0802">TPR repeat</keyword>
<keyword id="KW-0812">Transmembrane</keyword>
<keyword id="KW-1133">Transmembrane helix</keyword>
<reference key="1">
    <citation type="journal article" date="2003" name="Plant Physiol.">
        <title>The subcellular localization of plant protein phosphatase 5 isoforms is determined by alternative splicing.</title>
        <authorList>
            <person name="de la Fuente van Bentem S."/>
            <person name="Vossen J.H."/>
            <person name="Vermeer J.E.M."/>
            <person name="de Vroomen M.J."/>
            <person name="Gadella T.W.J. Jr."/>
            <person name="Haring M.A."/>
            <person name="Cornelissen B.J.C."/>
        </authorList>
    </citation>
    <scope>NUCLEOTIDE SEQUENCE [GENOMIC DNA / MRNA] (ISOFORMS 1 AND 2)</scope>
    <scope>MUTAGENESIS OF GLY-411</scope>
    <scope>FUNCTION</scope>
    <scope>SUBCELLULAR LOCATION</scope>
    <scope>TISSUE SPECIFICITY</scope>
    <scope>ALTERNATIVE PRODUCTS</scope>
    <scope>ACTIVATION BY FATTY ACIDS</scope>
    <source>
        <strain>cv. GCR161</strain>
        <strain>cv. VFN8</strain>
    </source>
</reference>
<gene>
    <name type="primary">PP5</name>
</gene>